<protein>
    <recommendedName>
        <fullName evidence="1">Pyridoxine/pyridoxamine 5'-phosphate oxidase</fullName>
        <ecNumber evidence="1">1.4.3.5</ecNumber>
    </recommendedName>
    <alternativeName>
        <fullName evidence="1">PNP/PMP oxidase</fullName>
        <shortName evidence="1">PNPOx</shortName>
    </alternativeName>
    <alternativeName>
        <fullName evidence="1">Pyridoxal 5'-phosphate synthase</fullName>
    </alternativeName>
</protein>
<gene>
    <name evidence="1" type="primary">pdxH</name>
    <name type="ordered locus">SFV_1655</name>
</gene>
<name>PDXH_SHIF8</name>
<organism>
    <name type="scientific">Shigella flexneri serotype 5b (strain 8401)</name>
    <dbReference type="NCBI Taxonomy" id="373384"/>
    <lineage>
        <taxon>Bacteria</taxon>
        <taxon>Pseudomonadati</taxon>
        <taxon>Pseudomonadota</taxon>
        <taxon>Gammaproteobacteria</taxon>
        <taxon>Enterobacterales</taxon>
        <taxon>Enterobacteriaceae</taxon>
        <taxon>Shigella</taxon>
    </lineage>
</organism>
<feature type="chain" id="PRO_0000292333" description="Pyridoxine/pyridoxamine 5'-phosphate oxidase">
    <location>
        <begin position="1"/>
        <end position="218"/>
    </location>
</feature>
<feature type="binding site" evidence="1">
    <location>
        <begin position="14"/>
        <end position="17"/>
    </location>
    <ligand>
        <name>substrate</name>
    </ligand>
</feature>
<feature type="binding site" evidence="1">
    <location>
        <begin position="67"/>
        <end position="72"/>
    </location>
    <ligand>
        <name>FMN</name>
        <dbReference type="ChEBI" id="CHEBI:58210"/>
    </ligand>
</feature>
<feature type="binding site" evidence="1">
    <location>
        <position position="72"/>
    </location>
    <ligand>
        <name>substrate</name>
    </ligand>
</feature>
<feature type="binding site" evidence="1">
    <location>
        <begin position="82"/>
        <end position="83"/>
    </location>
    <ligand>
        <name>FMN</name>
        <dbReference type="ChEBI" id="CHEBI:58210"/>
    </ligand>
</feature>
<feature type="binding site" evidence="1">
    <location>
        <position position="88"/>
    </location>
    <ligand>
        <name>FMN</name>
        <dbReference type="ChEBI" id="CHEBI:58210"/>
    </ligand>
</feature>
<feature type="binding site" evidence="1">
    <location>
        <position position="89"/>
    </location>
    <ligand>
        <name>FMN</name>
        <dbReference type="ChEBI" id="CHEBI:58210"/>
    </ligand>
</feature>
<feature type="binding site" evidence="1">
    <location>
        <position position="111"/>
    </location>
    <ligand>
        <name>FMN</name>
        <dbReference type="ChEBI" id="CHEBI:58210"/>
    </ligand>
</feature>
<feature type="binding site" evidence="1">
    <location>
        <position position="129"/>
    </location>
    <ligand>
        <name>substrate</name>
    </ligand>
</feature>
<feature type="binding site" evidence="1">
    <location>
        <position position="133"/>
    </location>
    <ligand>
        <name>substrate</name>
    </ligand>
</feature>
<feature type="binding site" evidence="1">
    <location>
        <position position="137"/>
    </location>
    <ligand>
        <name>substrate</name>
    </ligand>
</feature>
<feature type="binding site" evidence="1">
    <location>
        <begin position="146"/>
        <end position="147"/>
    </location>
    <ligand>
        <name>FMN</name>
        <dbReference type="ChEBI" id="CHEBI:58210"/>
    </ligand>
</feature>
<feature type="binding site" evidence="1">
    <location>
        <position position="191"/>
    </location>
    <ligand>
        <name>FMN</name>
        <dbReference type="ChEBI" id="CHEBI:58210"/>
    </ligand>
</feature>
<feature type="binding site" evidence="1">
    <location>
        <begin position="197"/>
        <end position="199"/>
    </location>
    <ligand>
        <name>substrate</name>
    </ligand>
</feature>
<feature type="binding site" evidence="1">
    <location>
        <position position="201"/>
    </location>
    <ligand>
        <name>FMN</name>
        <dbReference type="ChEBI" id="CHEBI:58210"/>
    </ligand>
</feature>
<reference key="1">
    <citation type="journal article" date="2006" name="BMC Genomics">
        <title>Complete genome sequence of Shigella flexneri 5b and comparison with Shigella flexneri 2a.</title>
        <authorList>
            <person name="Nie H."/>
            <person name="Yang F."/>
            <person name="Zhang X."/>
            <person name="Yang J."/>
            <person name="Chen L."/>
            <person name="Wang J."/>
            <person name="Xiong Z."/>
            <person name="Peng J."/>
            <person name="Sun L."/>
            <person name="Dong J."/>
            <person name="Xue Y."/>
            <person name="Xu X."/>
            <person name="Chen S."/>
            <person name="Yao Z."/>
            <person name="Shen Y."/>
            <person name="Jin Q."/>
        </authorList>
    </citation>
    <scope>NUCLEOTIDE SEQUENCE [LARGE SCALE GENOMIC DNA]</scope>
    <source>
        <strain>8401</strain>
    </source>
</reference>
<proteinExistence type="inferred from homology"/>
<sequence>MSDNDELQQIAHLRREYTKGGLRRRDLPADPLTLFERWLSQACEAKLADPTAMVVATVDEHGQPYQRIVLLKHYDEKGMVFYTNLGSRKAHQIENNPRVSLLFPWHTLERQVMVIGKAERLSTLEVMKYFHSRPRDSQIGAWVSKQSSRISARGILESKFLELKQKFQQGEVPLPSFWGGFRVSLEQIEFWQGGEHRLHDRFLYQRENDAWKIDRLAP</sequence>
<evidence type="ECO:0000255" key="1">
    <source>
        <dbReference type="HAMAP-Rule" id="MF_01629"/>
    </source>
</evidence>
<comment type="function">
    <text evidence="1">Catalyzes the oxidation of either pyridoxine 5'-phosphate (PNP) or pyridoxamine 5'-phosphate (PMP) into pyridoxal 5'-phosphate (PLP).</text>
</comment>
<comment type="catalytic activity">
    <reaction evidence="1">
        <text>pyridoxamine 5'-phosphate + O2 + H2O = pyridoxal 5'-phosphate + H2O2 + NH4(+)</text>
        <dbReference type="Rhea" id="RHEA:15817"/>
        <dbReference type="ChEBI" id="CHEBI:15377"/>
        <dbReference type="ChEBI" id="CHEBI:15379"/>
        <dbReference type="ChEBI" id="CHEBI:16240"/>
        <dbReference type="ChEBI" id="CHEBI:28938"/>
        <dbReference type="ChEBI" id="CHEBI:58451"/>
        <dbReference type="ChEBI" id="CHEBI:597326"/>
        <dbReference type="EC" id="1.4.3.5"/>
    </reaction>
</comment>
<comment type="catalytic activity">
    <reaction evidence="1">
        <text>pyridoxine 5'-phosphate + O2 = pyridoxal 5'-phosphate + H2O2</text>
        <dbReference type="Rhea" id="RHEA:15149"/>
        <dbReference type="ChEBI" id="CHEBI:15379"/>
        <dbReference type="ChEBI" id="CHEBI:16240"/>
        <dbReference type="ChEBI" id="CHEBI:58589"/>
        <dbReference type="ChEBI" id="CHEBI:597326"/>
        <dbReference type="EC" id="1.4.3.5"/>
    </reaction>
</comment>
<comment type="cofactor">
    <cofactor evidence="1">
        <name>FMN</name>
        <dbReference type="ChEBI" id="CHEBI:58210"/>
    </cofactor>
    <text evidence="1">Binds 1 FMN per subunit.</text>
</comment>
<comment type="pathway">
    <text evidence="1">Cofactor metabolism; pyridoxal 5'-phosphate salvage; pyridoxal 5'-phosphate from pyridoxamine 5'-phosphate: step 1/1.</text>
</comment>
<comment type="pathway">
    <text evidence="1">Cofactor metabolism; pyridoxal 5'-phosphate salvage; pyridoxal 5'-phosphate from pyridoxine 5'-phosphate: step 1/1.</text>
</comment>
<comment type="subunit">
    <text evidence="1">Homodimer.</text>
</comment>
<comment type="similarity">
    <text evidence="1">Belongs to the pyridoxamine 5'-phosphate oxidase family.</text>
</comment>
<accession>Q0T4D9</accession>
<keyword id="KW-0285">Flavoprotein</keyword>
<keyword id="KW-0288">FMN</keyword>
<keyword id="KW-0560">Oxidoreductase</keyword>
<keyword id="KW-0664">Pyridoxine biosynthesis</keyword>
<dbReference type="EC" id="1.4.3.5" evidence="1"/>
<dbReference type="EMBL" id="CP000266">
    <property type="protein sequence ID" value="ABF03826.1"/>
    <property type="molecule type" value="Genomic_DNA"/>
</dbReference>
<dbReference type="RefSeq" id="WP_001282319.1">
    <property type="nucleotide sequence ID" value="NC_008258.1"/>
</dbReference>
<dbReference type="SMR" id="Q0T4D9"/>
<dbReference type="GeneID" id="75171699"/>
<dbReference type="KEGG" id="sfv:SFV_1655"/>
<dbReference type="HOGENOM" id="CLU_032263_2_2_6"/>
<dbReference type="UniPathway" id="UPA01068">
    <property type="reaction ID" value="UER00304"/>
</dbReference>
<dbReference type="UniPathway" id="UPA01068">
    <property type="reaction ID" value="UER00305"/>
</dbReference>
<dbReference type="Proteomes" id="UP000000659">
    <property type="component" value="Chromosome"/>
</dbReference>
<dbReference type="GO" id="GO:0010181">
    <property type="term" value="F:FMN binding"/>
    <property type="evidence" value="ECO:0007669"/>
    <property type="project" value="UniProtKB-UniRule"/>
</dbReference>
<dbReference type="GO" id="GO:0004733">
    <property type="term" value="F:pyridoxamine phosphate oxidase activity"/>
    <property type="evidence" value="ECO:0007669"/>
    <property type="project" value="UniProtKB-UniRule"/>
</dbReference>
<dbReference type="GO" id="GO:0008615">
    <property type="term" value="P:pyridoxine biosynthetic process"/>
    <property type="evidence" value="ECO:0007669"/>
    <property type="project" value="UniProtKB-KW"/>
</dbReference>
<dbReference type="FunFam" id="2.30.110.10:FF:000001">
    <property type="entry name" value="Pyridoxine/pyridoxamine 5'-phosphate oxidase"/>
    <property type="match status" value="1"/>
</dbReference>
<dbReference type="Gene3D" id="2.30.110.10">
    <property type="entry name" value="Electron Transport, Fmn-binding Protein, Chain A"/>
    <property type="match status" value="1"/>
</dbReference>
<dbReference type="HAMAP" id="MF_01629">
    <property type="entry name" value="PdxH"/>
    <property type="match status" value="1"/>
</dbReference>
<dbReference type="InterPro" id="IPR000659">
    <property type="entry name" value="Pyridox_Oxase"/>
</dbReference>
<dbReference type="InterPro" id="IPR019740">
    <property type="entry name" value="Pyridox_Oxase_CS"/>
</dbReference>
<dbReference type="InterPro" id="IPR011576">
    <property type="entry name" value="Pyridox_Oxase_N"/>
</dbReference>
<dbReference type="InterPro" id="IPR019576">
    <property type="entry name" value="Pyridoxamine_oxidase_dimer_C"/>
</dbReference>
<dbReference type="InterPro" id="IPR012349">
    <property type="entry name" value="Split_barrel_FMN-bd"/>
</dbReference>
<dbReference type="NCBIfam" id="TIGR00558">
    <property type="entry name" value="pdxH"/>
    <property type="match status" value="1"/>
</dbReference>
<dbReference type="NCBIfam" id="NF004231">
    <property type="entry name" value="PRK05679.1"/>
    <property type="match status" value="1"/>
</dbReference>
<dbReference type="PANTHER" id="PTHR10851:SF0">
    <property type="entry name" value="PYRIDOXINE-5'-PHOSPHATE OXIDASE"/>
    <property type="match status" value="1"/>
</dbReference>
<dbReference type="PANTHER" id="PTHR10851">
    <property type="entry name" value="PYRIDOXINE-5-PHOSPHATE OXIDASE"/>
    <property type="match status" value="1"/>
</dbReference>
<dbReference type="Pfam" id="PF10590">
    <property type="entry name" value="PNP_phzG_C"/>
    <property type="match status" value="1"/>
</dbReference>
<dbReference type="Pfam" id="PF01243">
    <property type="entry name" value="PNPOx_N"/>
    <property type="match status" value="1"/>
</dbReference>
<dbReference type="PIRSF" id="PIRSF000190">
    <property type="entry name" value="Pyd_amn-ph_oxd"/>
    <property type="match status" value="1"/>
</dbReference>
<dbReference type="SUPFAM" id="SSF50475">
    <property type="entry name" value="FMN-binding split barrel"/>
    <property type="match status" value="1"/>
</dbReference>
<dbReference type="PROSITE" id="PS01064">
    <property type="entry name" value="PYRIDOX_OXIDASE"/>
    <property type="match status" value="1"/>
</dbReference>